<feature type="chain" id="PRO_1000201947" description="Cobalamin biosynthesis protein CobD">
    <location>
        <begin position="1"/>
        <end position="318"/>
    </location>
</feature>
<feature type="transmembrane region" description="Helical" evidence="1">
    <location>
        <begin position="51"/>
        <end position="71"/>
    </location>
</feature>
<feature type="transmembrane region" description="Helical" evidence="1">
    <location>
        <begin position="77"/>
        <end position="97"/>
    </location>
</feature>
<feature type="transmembrane region" description="Helical" evidence="1">
    <location>
        <begin position="153"/>
        <end position="173"/>
    </location>
</feature>
<feature type="transmembrane region" description="Helical" evidence="1">
    <location>
        <begin position="206"/>
        <end position="226"/>
    </location>
</feature>
<feature type="transmembrane region" description="Helical" evidence="1">
    <location>
        <begin position="296"/>
        <end position="316"/>
    </location>
</feature>
<keyword id="KW-1003">Cell membrane</keyword>
<keyword id="KW-0169">Cobalamin biosynthesis</keyword>
<keyword id="KW-0472">Membrane</keyword>
<keyword id="KW-1185">Reference proteome</keyword>
<keyword id="KW-0812">Transmembrane</keyword>
<keyword id="KW-1133">Transmembrane helix</keyword>
<accession>Q39YE5</accession>
<reference key="1">
    <citation type="journal article" date="2009" name="BMC Microbiol.">
        <title>The genome sequence of Geobacter metallireducens: features of metabolism, physiology and regulation common and dissimilar to Geobacter sulfurreducens.</title>
        <authorList>
            <person name="Aklujkar M."/>
            <person name="Krushkal J."/>
            <person name="DiBartolo G."/>
            <person name="Lapidus A."/>
            <person name="Land M.L."/>
            <person name="Lovley D.R."/>
        </authorList>
    </citation>
    <scope>NUCLEOTIDE SEQUENCE [LARGE SCALE GENOMIC DNA]</scope>
    <source>
        <strain>ATCC 53774 / DSM 7210 / GS-15</strain>
    </source>
</reference>
<gene>
    <name evidence="1" type="primary">cobD</name>
    <name type="ordered locus">Gmet_0486</name>
</gene>
<protein>
    <recommendedName>
        <fullName evidence="1">Cobalamin biosynthesis protein CobD</fullName>
    </recommendedName>
</protein>
<evidence type="ECO:0000255" key="1">
    <source>
        <dbReference type="HAMAP-Rule" id="MF_00024"/>
    </source>
</evidence>
<name>COBD_GEOMG</name>
<organism>
    <name type="scientific">Geobacter metallireducens (strain ATCC 53774 / DSM 7210 / GS-15)</name>
    <dbReference type="NCBI Taxonomy" id="269799"/>
    <lineage>
        <taxon>Bacteria</taxon>
        <taxon>Pseudomonadati</taxon>
        <taxon>Thermodesulfobacteriota</taxon>
        <taxon>Desulfuromonadia</taxon>
        <taxon>Geobacterales</taxon>
        <taxon>Geobacteraceae</taxon>
        <taxon>Geobacter</taxon>
    </lineage>
</organism>
<dbReference type="EMBL" id="CP000148">
    <property type="protein sequence ID" value="ABB30729.1"/>
    <property type="molecule type" value="Genomic_DNA"/>
</dbReference>
<dbReference type="STRING" id="269799.Gmet_0486"/>
<dbReference type="KEGG" id="gme:Gmet_0486"/>
<dbReference type="eggNOG" id="COG1270">
    <property type="taxonomic scope" value="Bacteria"/>
</dbReference>
<dbReference type="HOGENOM" id="CLU_054212_0_0_7"/>
<dbReference type="UniPathway" id="UPA00148"/>
<dbReference type="Proteomes" id="UP000007073">
    <property type="component" value="Chromosome"/>
</dbReference>
<dbReference type="GO" id="GO:0005886">
    <property type="term" value="C:plasma membrane"/>
    <property type="evidence" value="ECO:0007669"/>
    <property type="project" value="UniProtKB-SubCell"/>
</dbReference>
<dbReference type="GO" id="GO:0015420">
    <property type="term" value="F:ABC-type vitamin B12 transporter activity"/>
    <property type="evidence" value="ECO:0007669"/>
    <property type="project" value="UniProtKB-UniRule"/>
</dbReference>
<dbReference type="GO" id="GO:0048472">
    <property type="term" value="F:threonine-phosphate decarboxylase activity"/>
    <property type="evidence" value="ECO:0007669"/>
    <property type="project" value="InterPro"/>
</dbReference>
<dbReference type="GO" id="GO:0009236">
    <property type="term" value="P:cobalamin biosynthetic process"/>
    <property type="evidence" value="ECO:0007669"/>
    <property type="project" value="UniProtKB-UniRule"/>
</dbReference>
<dbReference type="HAMAP" id="MF_00024">
    <property type="entry name" value="CobD_CbiB"/>
    <property type="match status" value="1"/>
</dbReference>
<dbReference type="InterPro" id="IPR004485">
    <property type="entry name" value="Cobalamin_biosynth_CobD/CbiB"/>
</dbReference>
<dbReference type="NCBIfam" id="TIGR00380">
    <property type="entry name" value="cobal_cbiB"/>
    <property type="match status" value="1"/>
</dbReference>
<dbReference type="PANTHER" id="PTHR34308">
    <property type="entry name" value="COBALAMIN BIOSYNTHESIS PROTEIN CBIB"/>
    <property type="match status" value="1"/>
</dbReference>
<dbReference type="PANTHER" id="PTHR34308:SF1">
    <property type="entry name" value="COBALAMIN BIOSYNTHESIS PROTEIN CBIB"/>
    <property type="match status" value="1"/>
</dbReference>
<dbReference type="Pfam" id="PF03186">
    <property type="entry name" value="CobD_Cbib"/>
    <property type="match status" value="1"/>
</dbReference>
<comment type="function">
    <text evidence="1">Converts cobyric acid to cobinamide by the addition of aminopropanol on the F carboxylic group.</text>
</comment>
<comment type="pathway">
    <text evidence="1">Cofactor biosynthesis; adenosylcobalamin biosynthesis.</text>
</comment>
<comment type="subcellular location">
    <subcellularLocation>
        <location evidence="1">Cell membrane</location>
        <topology evidence="1">Multi-pass membrane protein</topology>
    </subcellularLocation>
</comment>
<comment type="similarity">
    <text evidence="1">Belongs to the CobD/CbiB family.</text>
</comment>
<sequence>MTEAGAVVLTAVLLDLLFGDPRWLPHPVVAIGKLITVLEKFLRRLVTNERVGGVLLLLLAVGITAGAAWGAVRGASLVHPLAGVVVSALLGWTCLAARSLHGESKRVADALVRGDLPEARRYLSFIVGRDTAGLSEPEVWRGAVETVAENTSDGVIAPLLFFMIGGAPLALAYKAVNTLDSMVGYKNERYLHFGWASARSDDLANLIPARLTGLLMTLAAPLAGLSGRGAWRIMLRDGRNHSSPNSGIPEAAAAGALGVQLGGTNVYFGKPVAKPTIGDPLKPLDATAWRGTVRLMYGAECLLVLLAAVMTTILTITD</sequence>
<proteinExistence type="inferred from homology"/>